<keyword id="KW-0456">Lyase</keyword>
<keyword id="KW-0460">Magnesium</keyword>
<keyword id="KW-0479">Metal-binding</keyword>
<protein>
    <recommendedName>
        <fullName>(-)-5-epieremophilene synthase STPS3</fullName>
        <ecNumber evidence="2">4.2.3.199</ecNumber>
    </recommendedName>
    <alternativeName>
        <fullName evidence="3">Sesquiterpene synthase 3</fullName>
        <shortName evidence="3">SmSTPS3</shortName>
    </alternativeName>
</protein>
<accession>A0A1W6GW18</accession>
<proteinExistence type="evidence at protein level"/>
<feature type="chain" id="PRO_0000447714" description="(-)-5-epieremophilene synthase STPS3">
    <location>
        <begin position="1"/>
        <end position="546"/>
    </location>
</feature>
<feature type="short sequence motif" description="DDXXD motif" evidence="4">
    <location>
        <begin position="299"/>
        <end position="303"/>
    </location>
</feature>
<feature type="binding site" evidence="1">
    <location>
        <position position="299"/>
    </location>
    <ligand>
        <name>Mg(2+)</name>
        <dbReference type="ChEBI" id="CHEBI:18420"/>
        <label>1</label>
    </ligand>
</feature>
<feature type="binding site" evidence="1">
    <location>
        <position position="299"/>
    </location>
    <ligand>
        <name>Mg(2+)</name>
        <dbReference type="ChEBI" id="CHEBI:18420"/>
        <label>2</label>
    </ligand>
</feature>
<feature type="binding site" evidence="1">
    <location>
        <position position="303"/>
    </location>
    <ligand>
        <name>Mg(2+)</name>
        <dbReference type="ChEBI" id="CHEBI:18420"/>
        <label>1</label>
    </ligand>
</feature>
<feature type="binding site" evidence="1">
    <location>
        <position position="303"/>
    </location>
    <ligand>
        <name>Mg(2+)</name>
        <dbReference type="ChEBI" id="CHEBI:18420"/>
        <label>2</label>
    </ligand>
</feature>
<feature type="binding site" evidence="1">
    <location>
        <position position="442"/>
    </location>
    <ligand>
        <name>Mg(2+)</name>
        <dbReference type="ChEBI" id="CHEBI:18420"/>
        <label>3</label>
    </ligand>
</feature>
<feature type="binding site" evidence="1">
    <location>
        <position position="446"/>
    </location>
    <ligand>
        <name>Mg(2+)</name>
        <dbReference type="ChEBI" id="CHEBI:18420"/>
        <label>3</label>
    </ligand>
</feature>
<feature type="binding site" evidence="1">
    <location>
        <position position="450"/>
    </location>
    <ligand>
        <name>Mg(2+)</name>
        <dbReference type="ChEBI" id="CHEBI:18420"/>
        <label>3</label>
    </ligand>
</feature>
<dbReference type="EC" id="4.2.3.199" evidence="2"/>
<dbReference type="EMBL" id="KY432514">
    <property type="protein sequence ID" value="ARM19969.1"/>
    <property type="molecule type" value="mRNA"/>
</dbReference>
<dbReference type="SMR" id="A0A1W6GW18"/>
<dbReference type="KEGG" id="ag:ARM19969"/>
<dbReference type="BRENDA" id="4.2.3.199">
    <property type="organism ID" value="9850"/>
</dbReference>
<dbReference type="SABIO-RK" id="A0A1W6GW18"/>
<dbReference type="UniPathway" id="UPA00213"/>
<dbReference type="GO" id="GO:0000287">
    <property type="term" value="F:magnesium ion binding"/>
    <property type="evidence" value="ECO:0007669"/>
    <property type="project" value="InterPro"/>
</dbReference>
<dbReference type="GO" id="GO:0010333">
    <property type="term" value="F:terpene synthase activity"/>
    <property type="evidence" value="ECO:0000314"/>
    <property type="project" value="UniProtKB"/>
</dbReference>
<dbReference type="GO" id="GO:0016102">
    <property type="term" value="P:diterpenoid biosynthetic process"/>
    <property type="evidence" value="ECO:0007669"/>
    <property type="project" value="InterPro"/>
</dbReference>
<dbReference type="GO" id="GO:0016106">
    <property type="term" value="P:sesquiterpenoid biosynthetic process"/>
    <property type="evidence" value="ECO:0000314"/>
    <property type="project" value="UniProtKB"/>
</dbReference>
<dbReference type="CDD" id="cd00684">
    <property type="entry name" value="Terpene_cyclase_plant_C1"/>
    <property type="match status" value="1"/>
</dbReference>
<dbReference type="FunFam" id="1.10.600.10:FF:000007">
    <property type="entry name" value="Isoprene synthase, chloroplastic"/>
    <property type="match status" value="1"/>
</dbReference>
<dbReference type="FunFam" id="1.50.10.130:FF:000001">
    <property type="entry name" value="Isoprene synthase, chloroplastic"/>
    <property type="match status" value="1"/>
</dbReference>
<dbReference type="Gene3D" id="1.10.600.10">
    <property type="entry name" value="Farnesyl Diphosphate Synthase"/>
    <property type="match status" value="1"/>
</dbReference>
<dbReference type="Gene3D" id="1.50.10.130">
    <property type="entry name" value="Terpene synthase, N-terminal domain"/>
    <property type="match status" value="1"/>
</dbReference>
<dbReference type="InterPro" id="IPR008949">
    <property type="entry name" value="Isoprenoid_synthase_dom_sf"/>
</dbReference>
<dbReference type="InterPro" id="IPR034741">
    <property type="entry name" value="Terpene_cyclase-like_1_C"/>
</dbReference>
<dbReference type="InterPro" id="IPR044814">
    <property type="entry name" value="Terpene_cyclase_plant_C1"/>
</dbReference>
<dbReference type="InterPro" id="IPR001906">
    <property type="entry name" value="Terpene_synth_N"/>
</dbReference>
<dbReference type="InterPro" id="IPR036965">
    <property type="entry name" value="Terpene_synth_N_sf"/>
</dbReference>
<dbReference type="InterPro" id="IPR050148">
    <property type="entry name" value="Terpene_synthase-like"/>
</dbReference>
<dbReference type="InterPro" id="IPR005630">
    <property type="entry name" value="Terpene_synthase_metal-bd"/>
</dbReference>
<dbReference type="InterPro" id="IPR008930">
    <property type="entry name" value="Terpenoid_cyclase/PrenylTrfase"/>
</dbReference>
<dbReference type="PANTHER" id="PTHR31225:SF93">
    <property type="entry name" value="ALPHA-HUMULENE_(-)-(E)-BETA-CARYOPHYLLENE SYNTHASE"/>
    <property type="match status" value="1"/>
</dbReference>
<dbReference type="PANTHER" id="PTHR31225">
    <property type="entry name" value="OS04G0344100 PROTEIN-RELATED"/>
    <property type="match status" value="1"/>
</dbReference>
<dbReference type="Pfam" id="PF01397">
    <property type="entry name" value="Terpene_synth"/>
    <property type="match status" value="1"/>
</dbReference>
<dbReference type="Pfam" id="PF03936">
    <property type="entry name" value="Terpene_synth_C"/>
    <property type="match status" value="1"/>
</dbReference>
<dbReference type="SFLD" id="SFLDS00005">
    <property type="entry name" value="Isoprenoid_Synthase_Type_I"/>
    <property type="match status" value="1"/>
</dbReference>
<dbReference type="SFLD" id="SFLDG01019">
    <property type="entry name" value="Terpene_Cyclase_Like_1_C_Termi"/>
    <property type="match status" value="1"/>
</dbReference>
<dbReference type="SUPFAM" id="SSF48239">
    <property type="entry name" value="Terpenoid cyclases/Protein prenyltransferases"/>
    <property type="match status" value="1"/>
</dbReference>
<dbReference type="SUPFAM" id="SSF48576">
    <property type="entry name" value="Terpenoid synthases"/>
    <property type="match status" value="1"/>
</dbReference>
<sequence>MATTQVEIQRPIANFSPSLWGDQFIKNDSGAKAAEKHCKAVEELKKEVMNMITAAESNLVEAMNLIDTLERLGISYHFEKEIDQKLNHFFSLNTDYSDESYDLYTVSLHFRLFRQHGHRISSDIFGRWIDESGKFKEGLKTDGKGLLSLYEASYLRTRGETILDDALEFATATLNSIAPHLESPLSKQVVHALIQPLHYGNPRIEAHNFISIYEENQDKNEFLLKFAKLDYNLLQMLHKEELHEVSRWWKELDLVSKLPYARDRVVECFFWAMGVYHEPQYSRARIMLTKTITMTSIIDDTYDAYGVIEELDIFTEAIERWNIEEMDRLPEYVKPFYKALLELYEQFEEELAEEGRSYAAHYAIESLKELVRSYHVEAKWFIQGYLPPFEEYLKNALITCTYCYHTTTSLLGVESAVEEDFQWLAKKPKMLVAGLLICRVIDDIATYEVEKERGQSATGIESYMRDNNATIEEAVAKFFEIATDAWKDINEECLMPSPYSRDVLMRILNLERIIDVTYKGNEDGYTQPEKVLKPHIIALFVDPIKM</sequence>
<evidence type="ECO:0000250" key="1">
    <source>
        <dbReference type="UniProtKB" id="Q40577"/>
    </source>
</evidence>
<evidence type="ECO:0000269" key="2">
    <source>
    </source>
</evidence>
<evidence type="ECO:0000303" key="3">
    <source>
    </source>
</evidence>
<evidence type="ECO:0000305" key="4"/>
<reference key="1">
    <citation type="journal article" date="2017" name="Front. Plant Sci.">
        <title>Identification of a novel (-)-5-epieremophilene synthase from Salvia miltiorrhiza via transcriptome mining.</title>
        <authorList>
            <person name="Fang X."/>
            <person name="Li C.Y."/>
            <person name="Yang Y."/>
            <person name="Cui M.Y."/>
            <person name="Chen X.Y."/>
            <person name="Yang L."/>
        </authorList>
    </citation>
    <scope>NUCLEOTIDE SEQUENCE [MRNA]</scope>
    <scope>FUNCTION</scope>
    <scope>CATALYTIC ACTIVITY</scope>
    <scope>BIOPHYSICOCHEMICAL PROPERTIES</scope>
    <scope>TISSUE SPECIFICITY</scope>
    <scope>INDUCTION</scope>
</reference>
<comment type="function">
    <text evidence="2">Sesquiterpene synthase that catalyzes the conversion of farnesyl diphosphate to (-)-5-epi-eremophilene.</text>
</comment>
<comment type="catalytic activity">
    <reaction evidence="2">
        <text>(2E,6E)-farnesyl diphosphate = (-)-5-epi-eremophilene + diphosphate</text>
        <dbReference type="Rhea" id="RHEA:58168"/>
        <dbReference type="ChEBI" id="CHEBI:33019"/>
        <dbReference type="ChEBI" id="CHEBI:142537"/>
        <dbReference type="ChEBI" id="CHEBI:175763"/>
        <dbReference type="EC" id="4.2.3.199"/>
    </reaction>
    <physiologicalReaction direction="left-to-right" evidence="2">
        <dbReference type="Rhea" id="RHEA:58169"/>
    </physiologicalReaction>
</comment>
<comment type="cofactor">
    <cofactor evidence="1">
        <name>Mg(2+)</name>
        <dbReference type="ChEBI" id="CHEBI:18420"/>
    </cofactor>
    <text evidence="1">Binds 3 Mg(2+) ions per subunit.</text>
</comment>
<comment type="biophysicochemical properties">
    <kinetics>
        <KM evidence="2">10.44 uM for farnesyl diphosphate</KM>
        <text evidence="2">kcat is 1.53 sec(-1) with farnesyl diphosphate as substrate.</text>
    </kinetics>
</comment>
<comment type="pathway">
    <text evidence="4">Secondary metabolite biosynthesis; terpenoid biosynthesis.</text>
</comment>
<comment type="subunit">
    <text evidence="1">Monomer.</text>
</comment>
<comment type="tissue specificity">
    <text evidence="2">Highly expressed in flowers and at lower levels in leaves.</text>
</comment>
<comment type="induction">
    <text evidence="2">Induced by abscisic acid (ABA).</text>
</comment>
<comment type="domain">
    <text evidence="4">The Asp-Asp-Xaa-Xaa-Asp/Glu (DDXXD/E) motif is important for the catalytic activity, presumably through binding to Mg(2+).</text>
</comment>
<comment type="similarity">
    <text evidence="4">Belongs to the terpene synthase family. Tpsa subfamily.</text>
</comment>
<organism>
    <name type="scientific">Salvia miltiorrhiza</name>
    <name type="common">Chinese sage</name>
    <dbReference type="NCBI Taxonomy" id="226208"/>
    <lineage>
        <taxon>Eukaryota</taxon>
        <taxon>Viridiplantae</taxon>
        <taxon>Streptophyta</taxon>
        <taxon>Embryophyta</taxon>
        <taxon>Tracheophyta</taxon>
        <taxon>Spermatophyta</taxon>
        <taxon>Magnoliopsida</taxon>
        <taxon>eudicotyledons</taxon>
        <taxon>Gunneridae</taxon>
        <taxon>Pentapetalae</taxon>
        <taxon>asterids</taxon>
        <taxon>lamiids</taxon>
        <taxon>Lamiales</taxon>
        <taxon>Lamiaceae</taxon>
        <taxon>Nepetoideae</taxon>
        <taxon>Mentheae</taxon>
        <taxon>Salviinae</taxon>
        <taxon>Salvia</taxon>
        <taxon>Salvia incertae sedis</taxon>
    </lineage>
</organism>
<name>STPS3_SALMI</name>
<gene>
    <name evidence="3" type="primary">STPS3</name>
</gene>